<name>RUVA_EHRRG</name>
<reference key="1">
    <citation type="journal article" date="2006" name="J. Bacteriol.">
        <title>Comparative genomic analysis of three strains of Ehrlichia ruminantium reveals an active process of genome size plasticity.</title>
        <authorList>
            <person name="Frutos R."/>
            <person name="Viari A."/>
            <person name="Ferraz C."/>
            <person name="Morgat A."/>
            <person name="Eychenie S."/>
            <person name="Kandassamy Y."/>
            <person name="Chantal I."/>
            <person name="Bensaid A."/>
            <person name="Coissac E."/>
            <person name="Vachiery N."/>
            <person name="Demaille J."/>
            <person name="Martinez D."/>
        </authorList>
    </citation>
    <scope>NUCLEOTIDE SEQUENCE [LARGE SCALE GENOMIC DNA]</scope>
    <source>
        <strain>Gardel</strain>
    </source>
</reference>
<feature type="chain" id="PRO_0000224866" description="Holliday junction branch migration complex subunit RuvA">
    <location>
        <begin position="1"/>
        <end position="191"/>
    </location>
</feature>
<feature type="region of interest" description="Domain I" evidence="1">
    <location>
        <begin position="1"/>
        <end position="64"/>
    </location>
</feature>
<feature type="region of interest" description="Domain II" evidence="1">
    <location>
        <begin position="65"/>
        <end position="142"/>
    </location>
</feature>
<feature type="region of interest" description="Flexible linker" evidence="1">
    <location>
        <begin position="143"/>
        <end position="146"/>
    </location>
</feature>
<feature type="region of interest" description="Domain III" evidence="1">
    <location>
        <begin position="146"/>
        <end position="191"/>
    </location>
</feature>
<accession>Q5FG40</accession>
<sequence length="191" mass="21547">MIGSITGNVEEIRDSYIILNVGNIGYIIYVSHKVLQTCKVGDNIKLYIETYVNRDNITQLYGFLNRQEQDYFKMLVTINGINYKTALSILSKLSPEQIFSAVVNNDKIAFKGNGIGEKLAGRIITELQYKINKMPIEETFSIIENDDSLAALISLGYEKLKAFNVIQEIKSKTPDASTQEVIRKALQKLSQ</sequence>
<gene>
    <name evidence="1" type="primary">ruvA</name>
    <name type="ordered locus">ERGA_CDS_07010</name>
</gene>
<evidence type="ECO:0000255" key="1">
    <source>
        <dbReference type="HAMAP-Rule" id="MF_00031"/>
    </source>
</evidence>
<organism>
    <name type="scientific">Ehrlichia ruminantium (strain Gardel)</name>
    <dbReference type="NCBI Taxonomy" id="302409"/>
    <lineage>
        <taxon>Bacteria</taxon>
        <taxon>Pseudomonadati</taxon>
        <taxon>Pseudomonadota</taxon>
        <taxon>Alphaproteobacteria</taxon>
        <taxon>Rickettsiales</taxon>
        <taxon>Anaplasmataceae</taxon>
        <taxon>Ehrlichia</taxon>
    </lineage>
</organism>
<protein>
    <recommendedName>
        <fullName evidence="1">Holliday junction branch migration complex subunit RuvA</fullName>
    </recommendedName>
</protein>
<keyword id="KW-0963">Cytoplasm</keyword>
<keyword id="KW-0227">DNA damage</keyword>
<keyword id="KW-0233">DNA recombination</keyword>
<keyword id="KW-0234">DNA repair</keyword>
<keyword id="KW-0238">DNA-binding</keyword>
<comment type="function">
    <text evidence="1">The RuvA-RuvB-RuvC complex processes Holliday junction (HJ) DNA during genetic recombination and DNA repair, while the RuvA-RuvB complex plays an important role in the rescue of blocked DNA replication forks via replication fork reversal (RFR). RuvA specifically binds to HJ cruciform DNA, conferring on it an open structure. The RuvB hexamer acts as an ATP-dependent pump, pulling dsDNA into and through the RuvAB complex. HJ branch migration allows RuvC to scan DNA until it finds its consensus sequence, where it cleaves and resolves the cruciform DNA.</text>
</comment>
<comment type="subunit">
    <text evidence="1">Homotetramer. Forms an RuvA(8)-RuvB(12)-Holliday junction (HJ) complex. HJ DNA is sandwiched between 2 RuvA tetramers; dsDNA enters through RuvA and exits via RuvB. An RuvB hexamer assembles on each DNA strand where it exits the tetramer. Each RuvB hexamer is contacted by two RuvA subunits (via domain III) on 2 adjacent RuvB subunits; this complex drives branch migration. In the full resolvosome a probable DNA-RuvA(4)-RuvB(12)-RuvC(2) complex forms which resolves the HJ.</text>
</comment>
<comment type="subcellular location">
    <subcellularLocation>
        <location evidence="1">Cytoplasm</location>
    </subcellularLocation>
</comment>
<comment type="domain">
    <text evidence="1">Has three domains with a flexible linker between the domains II and III and assumes an 'L' shape. Domain III is highly mobile and contacts RuvB.</text>
</comment>
<comment type="similarity">
    <text evidence="1">Belongs to the RuvA family.</text>
</comment>
<proteinExistence type="inferred from homology"/>
<dbReference type="EMBL" id="CR925677">
    <property type="protein sequence ID" value="CAI28153.1"/>
    <property type="molecule type" value="Genomic_DNA"/>
</dbReference>
<dbReference type="RefSeq" id="WP_011255783.1">
    <property type="nucleotide sequence ID" value="NC_006831.1"/>
</dbReference>
<dbReference type="SMR" id="Q5FG40"/>
<dbReference type="KEGG" id="erg:ERGA_CDS_07010"/>
<dbReference type="HOGENOM" id="CLU_087936_3_0_5"/>
<dbReference type="OrthoDB" id="5293449at2"/>
<dbReference type="Proteomes" id="UP000000533">
    <property type="component" value="Chromosome"/>
</dbReference>
<dbReference type="GO" id="GO:0005737">
    <property type="term" value="C:cytoplasm"/>
    <property type="evidence" value="ECO:0007669"/>
    <property type="project" value="UniProtKB-SubCell"/>
</dbReference>
<dbReference type="GO" id="GO:0009379">
    <property type="term" value="C:Holliday junction helicase complex"/>
    <property type="evidence" value="ECO:0007669"/>
    <property type="project" value="InterPro"/>
</dbReference>
<dbReference type="GO" id="GO:0048476">
    <property type="term" value="C:Holliday junction resolvase complex"/>
    <property type="evidence" value="ECO:0007669"/>
    <property type="project" value="UniProtKB-UniRule"/>
</dbReference>
<dbReference type="GO" id="GO:0005524">
    <property type="term" value="F:ATP binding"/>
    <property type="evidence" value="ECO:0007669"/>
    <property type="project" value="InterPro"/>
</dbReference>
<dbReference type="GO" id="GO:0000400">
    <property type="term" value="F:four-way junction DNA binding"/>
    <property type="evidence" value="ECO:0007669"/>
    <property type="project" value="UniProtKB-UniRule"/>
</dbReference>
<dbReference type="GO" id="GO:0009378">
    <property type="term" value="F:four-way junction helicase activity"/>
    <property type="evidence" value="ECO:0007669"/>
    <property type="project" value="InterPro"/>
</dbReference>
<dbReference type="GO" id="GO:0006310">
    <property type="term" value="P:DNA recombination"/>
    <property type="evidence" value="ECO:0007669"/>
    <property type="project" value="UniProtKB-UniRule"/>
</dbReference>
<dbReference type="GO" id="GO:0006281">
    <property type="term" value="P:DNA repair"/>
    <property type="evidence" value="ECO:0007669"/>
    <property type="project" value="UniProtKB-UniRule"/>
</dbReference>
<dbReference type="CDD" id="cd14332">
    <property type="entry name" value="UBA_RuvA_C"/>
    <property type="match status" value="1"/>
</dbReference>
<dbReference type="Gene3D" id="1.10.150.20">
    <property type="entry name" value="5' to 3' exonuclease, C-terminal subdomain"/>
    <property type="match status" value="1"/>
</dbReference>
<dbReference type="Gene3D" id="1.10.8.10">
    <property type="entry name" value="DNA helicase RuvA subunit, C-terminal domain"/>
    <property type="match status" value="1"/>
</dbReference>
<dbReference type="Gene3D" id="2.40.50.140">
    <property type="entry name" value="Nucleic acid-binding proteins"/>
    <property type="match status" value="1"/>
</dbReference>
<dbReference type="HAMAP" id="MF_00031">
    <property type="entry name" value="DNA_HJ_migration_RuvA"/>
    <property type="match status" value="1"/>
</dbReference>
<dbReference type="InterPro" id="IPR013849">
    <property type="entry name" value="DNA_helicase_Holl-junc_RuvA_I"/>
</dbReference>
<dbReference type="InterPro" id="IPR012340">
    <property type="entry name" value="NA-bd_OB-fold"/>
</dbReference>
<dbReference type="InterPro" id="IPR000085">
    <property type="entry name" value="RuvA"/>
</dbReference>
<dbReference type="InterPro" id="IPR010994">
    <property type="entry name" value="RuvA_2-like"/>
</dbReference>
<dbReference type="InterPro" id="IPR011114">
    <property type="entry name" value="RuvA_C"/>
</dbReference>
<dbReference type="InterPro" id="IPR036267">
    <property type="entry name" value="RuvA_C_sf"/>
</dbReference>
<dbReference type="NCBIfam" id="NF011194">
    <property type="entry name" value="PRK14600.1"/>
    <property type="match status" value="1"/>
</dbReference>
<dbReference type="NCBIfam" id="TIGR00084">
    <property type="entry name" value="ruvA"/>
    <property type="match status" value="1"/>
</dbReference>
<dbReference type="Pfam" id="PF14520">
    <property type="entry name" value="HHH_5"/>
    <property type="match status" value="1"/>
</dbReference>
<dbReference type="Pfam" id="PF07499">
    <property type="entry name" value="RuvA_C"/>
    <property type="match status" value="1"/>
</dbReference>
<dbReference type="Pfam" id="PF01330">
    <property type="entry name" value="RuvA_N"/>
    <property type="match status" value="1"/>
</dbReference>
<dbReference type="SUPFAM" id="SSF46929">
    <property type="entry name" value="DNA helicase RuvA subunit, C-terminal domain"/>
    <property type="match status" value="1"/>
</dbReference>
<dbReference type="SUPFAM" id="SSF50249">
    <property type="entry name" value="Nucleic acid-binding proteins"/>
    <property type="match status" value="1"/>
</dbReference>
<dbReference type="SUPFAM" id="SSF47781">
    <property type="entry name" value="RuvA domain 2-like"/>
    <property type="match status" value="1"/>
</dbReference>